<reference key="1">
    <citation type="journal article" date="2001" name="Virology">
        <title>Analysis of the first complete DNA sequence of an invertebrate iridovirus: coding strategy of the genome of Chilo iridescent virus.</title>
        <authorList>
            <person name="Jakob N.J."/>
            <person name="Mueller K."/>
            <person name="Bahr U."/>
            <person name="Darai G."/>
        </authorList>
    </citation>
    <scope>NUCLEOTIDE SEQUENCE [LARGE SCALE GENOMIC DNA]</scope>
</reference>
<reference key="2">
    <citation type="journal article" date="2007" name="Virol. J.">
        <title>Comparative genomic analysis of the family Iridoviridae: re-annotating and defining the core set of iridovirus genes.</title>
        <authorList>
            <person name="Eaton H.E."/>
            <person name="Metcalf J."/>
            <person name="Penny E."/>
            <person name="Tcherepanov V."/>
            <person name="Upton C."/>
            <person name="Brunetti C.R."/>
        </authorList>
    </citation>
    <scope>GENOME REANNOTATION</scope>
</reference>
<feature type="chain" id="PRO_0000377860" description="Uncharacterized protein 329R">
    <location>
        <begin position="1"/>
        <end position="378"/>
    </location>
</feature>
<proteinExistence type="inferred from homology"/>
<accession>Q91FJ5</accession>
<gene>
    <name type="ORF">IIV6-329R</name>
</gene>
<organismHost>
    <name type="scientific">Acheta domesticus</name>
    <name type="common">House cricket</name>
    <dbReference type="NCBI Taxonomy" id="6997"/>
</organismHost>
<organismHost>
    <name type="scientific">Chilo suppressalis</name>
    <name type="common">Asiatic rice borer moth</name>
    <dbReference type="NCBI Taxonomy" id="168631"/>
</organismHost>
<organismHost>
    <name type="scientific">Gryllus bimaculatus</name>
    <name type="common">Two-spotted cricket</name>
    <dbReference type="NCBI Taxonomy" id="6999"/>
</organismHost>
<organismHost>
    <name type="scientific">Gryllus campestris</name>
    <dbReference type="NCBI Taxonomy" id="58607"/>
</organismHost>
<organismHost>
    <name type="scientific">Spodoptera frugiperda</name>
    <name type="common">Fall armyworm</name>
    <dbReference type="NCBI Taxonomy" id="7108"/>
</organismHost>
<protein>
    <recommendedName>
        <fullName>Uncharacterized protein 329R</fullName>
    </recommendedName>
</protein>
<organism>
    <name type="scientific">Invertebrate iridescent virus 6</name>
    <name type="common">IIV-6</name>
    <name type="synonym">Chilo iridescent virus</name>
    <dbReference type="NCBI Taxonomy" id="176652"/>
    <lineage>
        <taxon>Viruses</taxon>
        <taxon>Varidnaviria</taxon>
        <taxon>Bamfordvirae</taxon>
        <taxon>Nucleocytoviricota</taxon>
        <taxon>Megaviricetes</taxon>
        <taxon>Pimascovirales</taxon>
        <taxon>Iridoviridae</taxon>
        <taxon>Betairidovirinae</taxon>
        <taxon>Iridovirus</taxon>
    </lineage>
</organism>
<evidence type="ECO:0000305" key="1"/>
<comment type="similarity">
    <text evidence="1">Belongs to the IIV-6 329R family.</text>
</comment>
<name>VF329_IIV6</name>
<sequence length="378" mass="42769">MISFSSITDSPKLNLDDVSDWYITNTIIKDPPKGITTRRIIKVGEDNDLLNAEDDSTDRNDAILQFARNVNPMVSVQYNNTGLGFGRSSNEAFLPYRIIKDGAFRPPIVDLRDLMPLSRQPRNTTSINTSAEFIDFSKGIKPSENALKRNEVLNTLKTIPMCSNKGYNFKTGIDQPYDVVYHIEDKPQRIKQALYEYTEDNIGRNVIDGVTQNIYEGFVSPETNKTFSTFRDETSGMVEGFSGRIPISKNDSNWQQHPHMQFKNLQNVTIATNANGNVTKDNISRVEKDRERNLPLYSVKTHKIYKGLHVNYLNGQEDRTCTTGMINPKKQRQTYSYGNNGQGGGGGNKPITIKIREQNNLGYGFNAIRDNEGVKINY</sequence>
<keyword id="KW-1185">Reference proteome</keyword>
<dbReference type="EMBL" id="AF303741">
    <property type="protein sequence ID" value="AAK82190.1"/>
    <property type="molecule type" value="Genomic_DNA"/>
</dbReference>
<dbReference type="RefSeq" id="NP_149792.1">
    <property type="nucleotide sequence ID" value="NC_003038.1"/>
</dbReference>
<dbReference type="KEGG" id="vg:1733347"/>
<dbReference type="OrthoDB" id="8037at10239"/>
<dbReference type="Proteomes" id="UP000001359">
    <property type="component" value="Genome"/>
</dbReference>